<accession>B9J7L1</accession>
<reference key="1">
    <citation type="journal article" date="2009" name="J. Bacteriol.">
        <title>Genome sequences of three Agrobacterium biovars help elucidate the evolution of multichromosome genomes in bacteria.</title>
        <authorList>
            <person name="Slater S.C."/>
            <person name="Goldman B.S."/>
            <person name="Goodner B."/>
            <person name="Setubal J.C."/>
            <person name="Farrand S.K."/>
            <person name="Nester E.W."/>
            <person name="Burr T.J."/>
            <person name="Banta L."/>
            <person name="Dickerman A.W."/>
            <person name="Paulsen I."/>
            <person name="Otten L."/>
            <person name="Suen G."/>
            <person name="Welch R."/>
            <person name="Almeida N.F."/>
            <person name="Arnold F."/>
            <person name="Burton O.T."/>
            <person name="Du Z."/>
            <person name="Ewing A."/>
            <person name="Godsy E."/>
            <person name="Heisel S."/>
            <person name="Houmiel K.L."/>
            <person name="Jhaveri J."/>
            <person name="Lu J."/>
            <person name="Miller N.M."/>
            <person name="Norton S."/>
            <person name="Chen Q."/>
            <person name="Phoolcharoen W."/>
            <person name="Ohlin V."/>
            <person name="Ondrusek D."/>
            <person name="Pride N."/>
            <person name="Stricklin S.L."/>
            <person name="Sun J."/>
            <person name="Wheeler C."/>
            <person name="Wilson L."/>
            <person name="Zhu H."/>
            <person name="Wood D.W."/>
        </authorList>
    </citation>
    <scope>NUCLEOTIDE SEQUENCE [LARGE SCALE GENOMIC DNA]</scope>
    <source>
        <strain>K84 / ATCC BAA-868</strain>
    </source>
</reference>
<dbReference type="EC" id="6.3.5.2" evidence="1"/>
<dbReference type="EMBL" id="CP000628">
    <property type="protein sequence ID" value="ACM25183.1"/>
    <property type="molecule type" value="Genomic_DNA"/>
</dbReference>
<dbReference type="RefSeq" id="WP_007694471.1">
    <property type="nucleotide sequence ID" value="NC_011985.1"/>
</dbReference>
<dbReference type="SMR" id="B9J7L1"/>
<dbReference type="STRING" id="311403.Arad_0510"/>
<dbReference type="MEROPS" id="C26.957"/>
<dbReference type="KEGG" id="ara:Arad_0510"/>
<dbReference type="eggNOG" id="COG0518">
    <property type="taxonomic scope" value="Bacteria"/>
</dbReference>
<dbReference type="eggNOG" id="COG0519">
    <property type="taxonomic scope" value="Bacteria"/>
</dbReference>
<dbReference type="HOGENOM" id="CLU_014340_0_5_5"/>
<dbReference type="UniPathway" id="UPA00189">
    <property type="reaction ID" value="UER00296"/>
</dbReference>
<dbReference type="Proteomes" id="UP000001600">
    <property type="component" value="Chromosome 1"/>
</dbReference>
<dbReference type="GO" id="GO:0005829">
    <property type="term" value="C:cytosol"/>
    <property type="evidence" value="ECO:0007669"/>
    <property type="project" value="TreeGrafter"/>
</dbReference>
<dbReference type="GO" id="GO:0005524">
    <property type="term" value="F:ATP binding"/>
    <property type="evidence" value="ECO:0007669"/>
    <property type="project" value="UniProtKB-UniRule"/>
</dbReference>
<dbReference type="GO" id="GO:0003921">
    <property type="term" value="F:GMP synthase activity"/>
    <property type="evidence" value="ECO:0007669"/>
    <property type="project" value="InterPro"/>
</dbReference>
<dbReference type="CDD" id="cd01742">
    <property type="entry name" value="GATase1_GMP_Synthase"/>
    <property type="match status" value="1"/>
</dbReference>
<dbReference type="CDD" id="cd01997">
    <property type="entry name" value="GMP_synthase_C"/>
    <property type="match status" value="1"/>
</dbReference>
<dbReference type="FunFam" id="3.30.300.10:FF:000002">
    <property type="entry name" value="GMP synthase [glutamine-hydrolyzing]"/>
    <property type="match status" value="1"/>
</dbReference>
<dbReference type="FunFam" id="3.40.50.620:FF:000001">
    <property type="entry name" value="GMP synthase [glutamine-hydrolyzing]"/>
    <property type="match status" value="1"/>
</dbReference>
<dbReference type="FunFam" id="3.40.50.880:FF:000001">
    <property type="entry name" value="GMP synthase [glutamine-hydrolyzing]"/>
    <property type="match status" value="1"/>
</dbReference>
<dbReference type="Gene3D" id="3.30.300.10">
    <property type="match status" value="1"/>
</dbReference>
<dbReference type="Gene3D" id="3.40.50.880">
    <property type="match status" value="1"/>
</dbReference>
<dbReference type="Gene3D" id="3.40.50.620">
    <property type="entry name" value="HUPs"/>
    <property type="match status" value="1"/>
</dbReference>
<dbReference type="HAMAP" id="MF_00344">
    <property type="entry name" value="GMP_synthase"/>
    <property type="match status" value="1"/>
</dbReference>
<dbReference type="InterPro" id="IPR029062">
    <property type="entry name" value="Class_I_gatase-like"/>
</dbReference>
<dbReference type="InterPro" id="IPR017926">
    <property type="entry name" value="GATASE"/>
</dbReference>
<dbReference type="InterPro" id="IPR001674">
    <property type="entry name" value="GMP_synth_C"/>
</dbReference>
<dbReference type="InterPro" id="IPR004739">
    <property type="entry name" value="GMP_synth_GATase"/>
</dbReference>
<dbReference type="InterPro" id="IPR022955">
    <property type="entry name" value="GMP_synthase"/>
</dbReference>
<dbReference type="InterPro" id="IPR025777">
    <property type="entry name" value="GMPS_ATP_PPase_dom"/>
</dbReference>
<dbReference type="InterPro" id="IPR014729">
    <property type="entry name" value="Rossmann-like_a/b/a_fold"/>
</dbReference>
<dbReference type="NCBIfam" id="TIGR00884">
    <property type="entry name" value="guaA_Cterm"/>
    <property type="match status" value="1"/>
</dbReference>
<dbReference type="NCBIfam" id="TIGR00888">
    <property type="entry name" value="guaA_Nterm"/>
    <property type="match status" value="1"/>
</dbReference>
<dbReference type="NCBIfam" id="NF000848">
    <property type="entry name" value="PRK00074.1"/>
    <property type="match status" value="1"/>
</dbReference>
<dbReference type="PANTHER" id="PTHR11922:SF2">
    <property type="entry name" value="GMP SYNTHASE [GLUTAMINE-HYDROLYZING]"/>
    <property type="match status" value="1"/>
</dbReference>
<dbReference type="PANTHER" id="PTHR11922">
    <property type="entry name" value="GMP SYNTHASE-RELATED"/>
    <property type="match status" value="1"/>
</dbReference>
<dbReference type="Pfam" id="PF00117">
    <property type="entry name" value="GATase"/>
    <property type="match status" value="1"/>
</dbReference>
<dbReference type="Pfam" id="PF00958">
    <property type="entry name" value="GMP_synt_C"/>
    <property type="match status" value="1"/>
</dbReference>
<dbReference type="Pfam" id="PF03054">
    <property type="entry name" value="tRNA_Me_trans"/>
    <property type="match status" value="1"/>
</dbReference>
<dbReference type="PRINTS" id="PR00097">
    <property type="entry name" value="ANTSNTHASEII"/>
</dbReference>
<dbReference type="PRINTS" id="PR00096">
    <property type="entry name" value="GATASE"/>
</dbReference>
<dbReference type="SUPFAM" id="SSF52402">
    <property type="entry name" value="Adenine nucleotide alpha hydrolases-like"/>
    <property type="match status" value="1"/>
</dbReference>
<dbReference type="SUPFAM" id="SSF52317">
    <property type="entry name" value="Class I glutamine amidotransferase-like"/>
    <property type="match status" value="1"/>
</dbReference>
<dbReference type="SUPFAM" id="SSF54810">
    <property type="entry name" value="GMP synthetase C-terminal dimerisation domain"/>
    <property type="match status" value="1"/>
</dbReference>
<dbReference type="PROSITE" id="PS51273">
    <property type="entry name" value="GATASE_TYPE_1"/>
    <property type="match status" value="1"/>
</dbReference>
<dbReference type="PROSITE" id="PS51553">
    <property type="entry name" value="GMPS_ATP_PPASE"/>
    <property type="match status" value="1"/>
</dbReference>
<proteinExistence type="inferred from homology"/>
<organism>
    <name type="scientific">Rhizobium rhizogenes (strain K84 / ATCC BAA-868)</name>
    <name type="common">Agrobacterium radiobacter</name>
    <dbReference type="NCBI Taxonomy" id="311403"/>
    <lineage>
        <taxon>Bacteria</taxon>
        <taxon>Pseudomonadati</taxon>
        <taxon>Pseudomonadota</taxon>
        <taxon>Alphaproteobacteria</taxon>
        <taxon>Hyphomicrobiales</taxon>
        <taxon>Rhizobiaceae</taxon>
        <taxon>Rhizobium/Agrobacterium group</taxon>
        <taxon>Rhizobium</taxon>
    </lineage>
</organism>
<keyword id="KW-0067">ATP-binding</keyword>
<keyword id="KW-0315">Glutamine amidotransferase</keyword>
<keyword id="KW-0332">GMP biosynthesis</keyword>
<keyword id="KW-0436">Ligase</keyword>
<keyword id="KW-0547">Nucleotide-binding</keyword>
<keyword id="KW-0658">Purine biosynthesis</keyword>
<name>GUAA_RHIR8</name>
<protein>
    <recommendedName>
        <fullName evidence="1">GMP synthase [glutamine-hydrolyzing]</fullName>
        <ecNumber evidence="1">6.3.5.2</ecNumber>
    </recommendedName>
    <alternativeName>
        <fullName evidence="1">GMP synthetase</fullName>
    </alternativeName>
    <alternativeName>
        <fullName evidence="1">Glutamine amidotransferase</fullName>
    </alternativeName>
</protein>
<sequence>MTQTAQPDTVLIVDFGSQVTQLIARRVREAGVYCEIVPFQSADAGFKRLQPKAVILSGSPASTVDEGSPRAPQIIFDSGVPVFGICYGQQTMCMQLGGKVESGHHREFGRAFLDVNKDCALFEGLWSSGSRHQVWMSHGDRVTALPDGFEVVATSSNAPYAFIADEKRKYYGVQFHPEVVHTPDGAKLIGNFIHNIAGIKGDWSMSAYRAKAVQAIRDQVGDKRVICALSGGVDSSVAALLIHEAVGDQLTCILVDHGLMRKDEAANVVAMFSEHYNLHLLHVDASERFIGELEGVSDPETKRKIIGRLFIETFEEEAKKLGGADFLGQGTLYPDVIESVSFTGGPSVTIKSHHNVGGLPERMNMQLVEPLRELFKDEVRALGKELGLPDSFIGRHPFPGPGLAIRCPGGITREKLEILREADAIYLDEIRKAGLYDAIWQAFAVLLPVQTVGVMGDGRTYEFVCALRAVTSVDGMTADFYHYDMEFLGRAATRIINEVRGINRVVYDVTSKPPGTIEWE</sequence>
<comment type="function">
    <text evidence="1">Catalyzes the synthesis of GMP from XMP.</text>
</comment>
<comment type="catalytic activity">
    <reaction evidence="1">
        <text>XMP + L-glutamine + ATP + H2O = GMP + L-glutamate + AMP + diphosphate + 2 H(+)</text>
        <dbReference type="Rhea" id="RHEA:11680"/>
        <dbReference type="ChEBI" id="CHEBI:15377"/>
        <dbReference type="ChEBI" id="CHEBI:15378"/>
        <dbReference type="ChEBI" id="CHEBI:29985"/>
        <dbReference type="ChEBI" id="CHEBI:30616"/>
        <dbReference type="ChEBI" id="CHEBI:33019"/>
        <dbReference type="ChEBI" id="CHEBI:57464"/>
        <dbReference type="ChEBI" id="CHEBI:58115"/>
        <dbReference type="ChEBI" id="CHEBI:58359"/>
        <dbReference type="ChEBI" id="CHEBI:456215"/>
        <dbReference type="EC" id="6.3.5.2"/>
    </reaction>
</comment>
<comment type="pathway">
    <text evidence="1">Purine metabolism; GMP biosynthesis; GMP from XMP (L-Gln route): step 1/1.</text>
</comment>
<comment type="subunit">
    <text evidence="1">Homodimer.</text>
</comment>
<gene>
    <name evidence="1" type="primary">guaA</name>
    <name type="ordered locus">Arad_0510</name>
</gene>
<evidence type="ECO:0000255" key="1">
    <source>
        <dbReference type="HAMAP-Rule" id="MF_00344"/>
    </source>
</evidence>
<feature type="chain" id="PRO_1000133346" description="GMP synthase [glutamine-hydrolyzing]">
    <location>
        <begin position="1"/>
        <end position="520"/>
    </location>
</feature>
<feature type="domain" description="Glutamine amidotransferase type-1" evidence="1">
    <location>
        <begin position="9"/>
        <end position="202"/>
    </location>
</feature>
<feature type="domain" description="GMPS ATP-PPase" evidence="1">
    <location>
        <begin position="203"/>
        <end position="395"/>
    </location>
</feature>
<feature type="active site" description="Nucleophile" evidence="1">
    <location>
        <position position="86"/>
    </location>
</feature>
<feature type="active site" evidence="1">
    <location>
        <position position="176"/>
    </location>
</feature>
<feature type="active site" evidence="1">
    <location>
        <position position="178"/>
    </location>
</feature>
<feature type="binding site" evidence="1">
    <location>
        <begin position="230"/>
        <end position="236"/>
    </location>
    <ligand>
        <name>ATP</name>
        <dbReference type="ChEBI" id="CHEBI:30616"/>
    </ligand>
</feature>